<comment type="function">
    <text>Growth hormone plays an important role in growth control and is involved in the regulation of several anabolic processes. Implicated as an osmoregulatory substance important for seawater adaptation.</text>
</comment>
<comment type="subcellular location">
    <subcellularLocation>
        <location>Secreted</location>
    </subcellularLocation>
</comment>
<comment type="similarity">
    <text evidence="2">Belongs to the somatotropin/prolactin family.</text>
</comment>
<name>SOMA_ESOLU</name>
<gene>
    <name type="primary">gh</name>
</gene>
<evidence type="ECO:0000250" key="1"/>
<evidence type="ECO:0000305" key="2"/>
<organism>
    <name type="scientific">Esox lucius</name>
    <name type="common">Northern pike</name>
    <dbReference type="NCBI Taxonomy" id="8010"/>
    <lineage>
        <taxon>Eukaryota</taxon>
        <taxon>Metazoa</taxon>
        <taxon>Chordata</taxon>
        <taxon>Craniata</taxon>
        <taxon>Vertebrata</taxon>
        <taxon>Euteleostomi</taxon>
        <taxon>Actinopterygii</taxon>
        <taxon>Neopterygii</taxon>
        <taxon>Teleostei</taxon>
        <taxon>Protacanthopterygii</taxon>
        <taxon>Esociformes</taxon>
        <taxon>Esocidae</taxon>
        <taxon>Esox</taxon>
    </lineage>
</organism>
<accession>P34744</accession>
<sequence length="209" mass="24008">MGQVFLLMPVLLVAGYLSLGAAMENQRLFNIAVNRVQHLHLLAQKMFNDFEGTLLPDERRQLNKIFLLDFCNSDSIVSPIDKHETQKSSVLKLLHISFRLIESWEYPSQTLTHTMSNNLNQNQMSEKLSNLKVGINLLIKGNQEDVPSLDDNDSQQLLPYGNYYQNLGDNDNVRRNYELLACFKKDMHKVETYLTVAKCRKSLEANCTL</sequence>
<feature type="signal peptide" evidence="1">
    <location>
        <begin position="1"/>
        <end position="22"/>
    </location>
</feature>
<feature type="chain" id="PRO_0000033022" description="Somatotropin">
    <location>
        <begin position="23"/>
        <end position="209"/>
    </location>
</feature>
<feature type="binding site" evidence="1">
    <location>
        <position position="38"/>
    </location>
    <ligand>
        <name>Zn(2+)</name>
        <dbReference type="ChEBI" id="CHEBI:29105"/>
    </ligand>
</feature>
<feature type="binding site" evidence="1">
    <location>
        <position position="191"/>
    </location>
    <ligand>
        <name>Zn(2+)</name>
        <dbReference type="ChEBI" id="CHEBI:29105"/>
    </ligand>
</feature>
<feature type="disulfide bond" evidence="1">
    <location>
        <begin position="71"/>
        <end position="182"/>
    </location>
</feature>
<feature type="disulfide bond" evidence="1">
    <location>
        <begin position="199"/>
        <end position="207"/>
    </location>
</feature>
<proteinExistence type="evidence at transcript level"/>
<protein>
    <recommendedName>
        <fullName>Somatotropin</fullName>
    </recommendedName>
    <alternativeName>
        <fullName>Growth hormone</fullName>
    </alternativeName>
</protein>
<reference key="1">
    <citation type="journal article" date="1992" name="Mol. Mar. Biol. Biotechnol.">
        <title>Molecular cloning and sequence analysis of the cDNA for northern pike (Esox lucius) growth hormone.</title>
        <authorList>
            <person name="Schneider J.F."/>
            <person name="Myster S.H."/>
            <person name="Hackett P.B."/>
            <person name="Guise K.S."/>
            <person name="Faras A.J."/>
        </authorList>
    </citation>
    <scope>NUCLEOTIDE SEQUENCE [MRNA]</scope>
    <source>
        <tissue>Pituitary</tissue>
    </source>
</reference>
<keyword id="KW-1015">Disulfide bond</keyword>
<keyword id="KW-0372">Hormone</keyword>
<keyword id="KW-0479">Metal-binding</keyword>
<keyword id="KW-1185">Reference proteome</keyword>
<keyword id="KW-0964">Secreted</keyword>
<keyword id="KW-0732">Signal</keyword>
<keyword id="KW-0862">Zinc</keyword>
<dbReference type="EMBL" id="S66470">
    <property type="protein sequence ID" value="AAB28215.1"/>
    <property type="molecule type" value="mRNA"/>
</dbReference>
<dbReference type="RefSeq" id="NP_001290869.1">
    <property type="nucleotide sequence ID" value="NM_001303940.1"/>
</dbReference>
<dbReference type="SMR" id="P34744"/>
<dbReference type="FunCoup" id="P34744">
    <property type="interactions" value="1887"/>
</dbReference>
<dbReference type="STRING" id="8010.ENSELUP00000034449"/>
<dbReference type="GeneID" id="105023357"/>
<dbReference type="KEGG" id="els:105023357"/>
<dbReference type="CTD" id="2688"/>
<dbReference type="InParanoid" id="P34744"/>
<dbReference type="OrthoDB" id="9925773at2759"/>
<dbReference type="Proteomes" id="UP000265140">
    <property type="component" value="Unassembled WGS sequence"/>
</dbReference>
<dbReference type="GO" id="GO:0005615">
    <property type="term" value="C:extracellular space"/>
    <property type="evidence" value="ECO:0007669"/>
    <property type="project" value="InterPro"/>
</dbReference>
<dbReference type="GO" id="GO:0070186">
    <property type="term" value="F:growth hormone activity"/>
    <property type="evidence" value="ECO:0007669"/>
    <property type="project" value="TreeGrafter"/>
</dbReference>
<dbReference type="GO" id="GO:0005131">
    <property type="term" value="F:growth hormone receptor binding"/>
    <property type="evidence" value="ECO:0007669"/>
    <property type="project" value="InterPro"/>
</dbReference>
<dbReference type="GO" id="GO:0046872">
    <property type="term" value="F:metal ion binding"/>
    <property type="evidence" value="ECO:0007669"/>
    <property type="project" value="UniProtKB-KW"/>
</dbReference>
<dbReference type="GO" id="GO:0048513">
    <property type="term" value="P:animal organ development"/>
    <property type="evidence" value="ECO:0007669"/>
    <property type="project" value="TreeGrafter"/>
</dbReference>
<dbReference type="GO" id="GO:0060396">
    <property type="term" value="P:growth hormone receptor signaling pathway"/>
    <property type="evidence" value="ECO:0007669"/>
    <property type="project" value="TreeGrafter"/>
</dbReference>
<dbReference type="GO" id="GO:0045927">
    <property type="term" value="P:positive regulation of growth"/>
    <property type="evidence" value="ECO:0007669"/>
    <property type="project" value="TreeGrafter"/>
</dbReference>
<dbReference type="GO" id="GO:0046427">
    <property type="term" value="P:positive regulation of receptor signaling pathway via JAK-STAT"/>
    <property type="evidence" value="ECO:0007669"/>
    <property type="project" value="TreeGrafter"/>
</dbReference>
<dbReference type="GO" id="GO:0031667">
    <property type="term" value="P:response to nutrient levels"/>
    <property type="evidence" value="ECO:0007669"/>
    <property type="project" value="TreeGrafter"/>
</dbReference>
<dbReference type="CDD" id="cd10285">
    <property type="entry name" value="somatotropin_like"/>
    <property type="match status" value="1"/>
</dbReference>
<dbReference type="FunFam" id="1.20.1250.10:FF:000009">
    <property type="entry name" value="Growth hormone"/>
    <property type="match status" value="1"/>
</dbReference>
<dbReference type="Gene3D" id="1.20.1250.10">
    <property type="match status" value="1"/>
</dbReference>
<dbReference type="InterPro" id="IPR009079">
    <property type="entry name" value="4_helix_cytokine-like_core"/>
</dbReference>
<dbReference type="InterPro" id="IPR034975">
    <property type="entry name" value="Somatotropin"/>
</dbReference>
<dbReference type="InterPro" id="IPR001400">
    <property type="entry name" value="Somatotropin/Prolactin"/>
</dbReference>
<dbReference type="InterPro" id="IPR018116">
    <property type="entry name" value="Somatotropin_CS"/>
</dbReference>
<dbReference type="PANTHER" id="PTHR11417:SF2">
    <property type="entry name" value="SOMATOTROPIN"/>
    <property type="match status" value="1"/>
</dbReference>
<dbReference type="PANTHER" id="PTHR11417">
    <property type="entry name" value="SOMATOTROPIN,PROLACTIN"/>
    <property type="match status" value="1"/>
</dbReference>
<dbReference type="Pfam" id="PF00103">
    <property type="entry name" value="Hormone_1"/>
    <property type="match status" value="1"/>
</dbReference>
<dbReference type="PRINTS" id="PR00836">
    <property type="entry name" value="SOMATOTROPIN"/>
</dbReference>
<dbReference type="SUPFAM" id="SSF47266">
    <property type="entry name" value="4-helical cytokines"/>
    <property type="match status" value="1"/>
</dbReference>
<dbReference type="PROSITE" id="PS00266">
    <property type="entry name" value="SOMATOTROPIN_1"/>
    <property type="match status" value="1"/>
</dbReference>
<dbReference type="PROSITE" id="PS00338">
    <property type="entry name" value="SOMATOTROPIN_2"/>
    <property type="match status" value="1"/>
</dbReference>